<keyword id="KW-0489">Methyltransferase</keyword>
<keyword id="KW-1185">Reference proteome</keyword>
<keyword id="KW-0949">S-adenosyl-L-methionine</keyword>
<keyword id="KW-0808">Transferase</keyword>
<name>PRMC_BUCAI</name>
<evidence type="ECO:0000255" key="1">
    <source>
        <dbReference type="HAMAP-Rule" id="MF_02126"/>
    </source>
</evidence>
<accession>P57269</accession>
<feature type="chain" id="PRO_0000157161" description="Release factor glutamine methyltransferase">
    <location>
        <begin position="1"/>
        <end position="277"/>
    </location>
</feature>
<feature type="binding site" evidence="1">
    <location>
        <begin position="117"/>
        <end position="121"/>
    </location>
    <ligand>
        <name>S-adenosyl-L-methionine</name>
        <dbReference type="ChEBI" id="CHEBI:59789"/>
    </ligand>
</feature>
<feature type="binding site" evidence="1">
    <location>
        <position position="140"/>
    </location>
    <ligand>
        <name>S-adenosyl-L-methionine</name>
        <dbReference type="ChEBI" id="CHEBI:59789"/>
    </ligand>
</feature>
<feature type="binding site" evidence="1">
    <location>
        <position position="168"/>
    </location>
    <ligand>
        <name>S-adenosyl-L-methionine</name>
        <dbReference type="ChEBI" id="CHEBI:59789"/>
    </ligand>
</feature>
<feature type="binding site" evidence="1">
    <location>
        <begin position="182"/>
        <end position="185"/>
    </location>
    <ligand>
        <name>substrate</name>
    </ligand>
</feature>
<feature type="binding site" evidence="1">
    <location>
        <position position="182"/>
    </location>
    <ligand>
        <name>S-adenosyl-L-methionine</name>
        <dbReference type="ChEBI" id="CHEBI:59789"/>
    </ligand>
</feature>
<dbReference type="EC" id="2.1.1.297" evidence="1"/>
<dbReference type="EMBL" id="BA000003">
    <property type="protein sequence ID" value="BAB12889.1"/>
    <property type="molecule type" value="Genomic_DNA"/>
</dbReference>
<dbReference type="RefSeq" id="NP_240003.1">
    <property type="nucleotide sequence ID" value="NC_002528.1"/>
</dbReference>
<dbReference type="RefSeq" id="WP_009874129.1">
    <property type="nucleotide sequence ID" value="NC_002528.1"/>
</dbReference>
<dbReference type="SMR" id="P57269"/>
<dbReference type="STRING" id="563178.BUAP5A_169"/>
<dbReference type="EnsemblBacteria" id="BAB12889">
    <property type="protein sequence ID" value="BAB12889"/>
    <property type="gene ID" value="BAB12889"/>
</dbReference>
<dbReference type="KEGG" id="buc:BU172"/>
<dbReference type="PATRIC" id="fig|107806.10.peg.183"/>
<dbReference type="eggNOG" id="COG2890">
    <property type="taxonomic scope" value="Bacteria"/>
</dbReference>
<dbReference type="HOGENOM" id="CLU_018398_3_0_6"/>
<dbReference type="Proteomes" id="UP000001806">
    <property type="component" value="Chromosome"/>
</dbReference>
<dbReference type="GO" id="GO:0003676">
    <property type="term" value="F:nucleic acid binding"/>
    <property type="evidence" value="ECO:0007669"/>
    <property type="project" value="InterPro"/>
</dbReference>
<dbReference type="GO" id="GO:0102559">
    <property type="term" value="F:protein-(glutamine-N5) methyltransferase activity"/>
    <property type="evidence" value="ECO:0007669"/>
    <property type="project" value="UniProtKB-EC"/>
</dbReference>
<dbReference type="GO" id="GO:0036009">
    <property type="term" value="F:protein-glutamine N-methyltransferase activity"/>
    <property type="evidence" value="ECO:0007669"/>
    <property type="project" value="UniProtKB-UniRule"/>
</dbReference>
<dbReference type="GO" id="GO:0032259">
    <property type="term" value="P:methylation"/>
    <property type="evidence" value="ECO:0007669"/>
    <property type="project" value="UniProtKB-KW"/>
</dbReference>
<dbReference type="CDD" id="cd02440">
    <property type="entry name" value="AdoMet_MTases"/>
    <property type="match status" value="1"/>
</dbReference>
<dbReference type="FunFam" id="3.40.50.150:FF:000053">
    <property type="entry name" value="Release factor glutamine methyltransferase"/>
    <property type="match status" value="1"/>
</dbReference>
<dbReference type="Gene3D" id="1.10.8.10">
    <property type="entry name" value="DNA helicase RuvA subunit, C-terminal domain"/>
    <property type="match status" value="1"/>
</dbReference>
<dbReference type="Gene3D" id="3.40.50.150">
    <property type="entry name" value="Vaccinia Virus protein VP39"/>
    <property type="match status" value="1"/>
</dbReference>
<dbReference type="HAMAP" id="MF_02126">
    <property type="entry name" value="RF_methyltr_PrmC"/>
    <property type="match status" value="1"/>
</dbReference>
<dbReference type="InterPro" id="IPR002052">
    <property type="entry name" value="DNA_methylase_N6_adenine_CS"/>
</dbReference>
<dbReference type="InterPro" id="IPR004556">
    <property type="entry name" value="HemK-like"/>
</dbReference>
<dbReference type="InterPro" id="IPR050320">
    <property type="entry name" value="N5-glutamine_MTase"/>
</dbReference>
<dbReference type="InterPro" id="IPR040758">
    <property type="entry name" value="PrmC_N"/>
</dbReference>
<dbReference type="InterPro" id="IPR019874">
    <property type="entry name" value="RF_methyltr_PrmC"/>
</dbReference>
<dbReference type="InterPro" id="IPR029063">
    <property type="entry name" value="SAM-dependent_MTases_sf"/>
</dbReference>
<dbReference type="InterPro" id="IPR007848">
    <property type="entry name" value="Small_mtfrase_dom"/>
</dbReference>
<dbReference type="NCBIfam" id="TIGR00536">
    <property type="entry name" value="hemK_fam"/>
    <property type="match status" value="1"/>
</dbReference>
<dbReference type="NCBIfam" id="TIGR03534">
    <property type="entry name" value="RF_mod_PrmC"/>
    <property type="match status" value="1"/>
</dbReference>
<dbReference type="PANTHER" id="PTHR18895">
    <property type="entry name" value="HEMK METHYLTRANSFERASE"/>
    <property type="match status" value="1"/>
</dbReference>
<dbReference type="PANTHER" id="PTHR18895:SF74">
    <property type="entry name" value="MTRF1L RELEASE FACTOR GLUTAMINE METHYLTRANSFERASE"/>
    <property type="match status" value="1"/>
</dbReference>
<dbReference type="Pfam" id="PF05175">
    <property type="entry name" value="MTS"/>
    <property type="match status" value="1"/>
</dbReference>
<dbReference type="Pfam" id="PF17827">
    <property type="entry name" value="PrmC_N"/>
    <property type="match status" value="1"/>
</dbReference>
<dbReference type="SUPFAM" id="SSF53335">
    <property type="entry name" value="S-adenosyl-L-methionine-dependent methyltransferases"/>
    <property type="match status" value="1"/>
</dbReference>
<protein>
    <recommendedName>
        <fullName evidence="1">Release factor glutamine methyltransferase</fullName>
        <shortName evidence="1">RF MTase</shortName>
        <ecNumber evidence="1">2.1.1.297</ecNumber>
    </recommendedName>
    <alternativeName>
        <fullName>M.BusHemKP</fullName>
    </alternativeName>
    <alternativeName>
        <fullName evidence="1">N5-glutamine methyltransferase PrmC</fullName>
    </alternativeName>
    <alternativeName>
        <fullName evidence="1">Protein-(glutamine-N5) MTase PrmC</fullName>
    </alternativeName>
    <alternativeName>
        <fullName evidence="1">Protein-glutamine N-methyltransferase PrmC</fullName>
    </alternativeName>
</protein>
<sequence>MNIKKWIKKSIQKLSHVDNPKFESELLLSYVTKHTRSFIISSDEIQLTEKQYKYLNHLIHRRSLGEPIAYIIKEKEFWSLSLCVSYDTLIPRPDTEILVERALSKIKSNSACILDLGTGCGAIALALASINSNWNIIGIDKSENALAIARINASKLNFKNVTFFFSDWFLNIKKKFNIIVSNPPYVSKKEIKFFKKDIFFEPLSALISDNNGLSDIENIIKNSKHYLFYGGWLMIEHGWRQKVKVQYLFKKYNFHEIESYQDYGGNDRVTIGKKYDK</sequence>
<proteinExistence type="inferred from homology"/>
<organism>
    <name type="scientific">Buchnera aphidicola subsp. Acyrthosiphon pisum (strain APS)</name>
    <name type="common">Acyrthosiphon pisum symbiotic bacterium</name>
    <dbReference type="NCBI Taxonomy" id="107806"/>
    <lineage>
        <taxon>Bacteria</taxon>
        <taxon>Pseudomonadati</taxon>
        <taxon>Pseudomonadota</taxon>
        <taxon>Gammaproteobacteria</taxon>
        <taxon>Enterobacterales</taxon>
        <taxon>Erwiniaceae</taxon>
        <taxon>Buchnera</taxon>
    </lineage>
</organism>
<gene>
    <name evidence="1" type="primary">prmC</name>
    <name type="synonym">hemK</name>
    <name type="ordered locus">BU172</name>
</gene>
<comment type="function">
    <text evidence="1">Methylates the class 1 translation termination release factors RF1/PrfA and RF2/PrfB on the glutamine residue of the universally conserved GGQ motif.</text>
</comment>
<comment type="catalytic activity">
    <reaction evidence="1">
        <text>L-glutaminyl-[peptide chain release factor] + S-adenosyl-L-methionine = N(5)-methyl-L-glutaminyl-[peptide chain release factor] + S-adenosyl-L-homocysteine + H(+)</text>
        <dbReference type="Rhea" id="RHEA:42896"/>
        <dbReference type="Rhea" id="RHEA-COMP:10271"/>
        <dbReference type="Rhea" id="RHEA-COMP:10272"/>
        <dbReference type="ChEBI" id="CHEBI:15378"/>
        <dbReference type="ChEBI" id="CHEBI:30011"/>
        <dbReference type="ChEBI" id="CHEBI:57856"/>
        <dbReference type="ChEBI" id="CHEBI:59789"/>
        <dbReference type="ChEBI" id="CHEBI:61891"/>
        <dbReference type="EC" id="2.1.1.297"/>
    </reaction>
</comment>
<comment type="similarity">
    <text evidence="1">Belongs to the protein N5-glutamine methyltransferase family. PrmC subfamily.</text>
</comment>
<reference key="1">
    <citation type="journal article" date="2000" name="Nature">
        <title>Genome sequence of the endocellular bacterial symbiont of aphids Buchnera sp. APS.</title>
        <authorList>
            <person name="Shigenobu S."/>
            <person name="Watanabe H."/>
            <person name="Hattori M."/>
            <person name="Sakaki Y."/>
            <person name="Ishikawa H."/>
        </authorList>
    </citation>
    <scope>NUCLEOTIDE SEQUENCE [LARGE SCALE GENOMIC DNA]</scope>
    <source>
        <strain>APS</strain>
    </source>
</reference>